<evidence type="ECO:0000255" key="1">
    <source>
        <dbReference type="HAMAP-Rule" id="MF_00225"/>
    </source>
</evidence>
<name>PYRD_CUPNH</name>
<accession>Q0KBT4</accession>
<dbReference type="EC" id="1.3.5.2" evidence="1"/>
<dbReference type="EMBL" id="AM260479">
    <property type="protein sequence ID" value="CAJ92537.1"/>
    <property type="molecule type" value="Genomic_DNA"/>
</dbReference>
<dbReference type="RefSeq" id="WP_011615054.1">
    <property type="nucleotide sequence ID" value="NC_008313.1"/>
</dbReference>
<dbReference type="SMR" id="Q0KBT4"/>
<dbReference type="STRING" id="381666.H16_A1401"/>
<dbReference type="KEGG" id="reh:H16_A1401"/>
<dbReference type="PATRIC" id="fig|381666.6.peg.1790"/>
<dbReference type="eggNOG" id="COG0167">
    <property type="taxonomic scope" value="Bacteria"/>
</dbReference>
<dbReference type="HOGENOM" id="CLU_013640_2_0_4"/>
<dbReference type="OrthoDB" id="9802377at2"/>
<dbReference type="UniPathway" id="UPA00070">
    <property type="reaction ID" value="UER00946"/>
</dbReference>
<dbReference type="Proteomes" id="UP000008210">
    <property type="component" value="Chromosome 1"/>
</dbReference>
<dbReference type="GO" id="GO:0005737">
    <property type="term" value="C:cytoplasm"/>
    <property type="evidence" value="ECO:0007669"/>
    <property type="project" value="InterPro"/>
</dbReference>
<dbReference type="GO" id="GO:0005886">
    <property type="term" value="C:plasma membrane"/>
    <property type="evidence" value="ECO:0007669"/>
    <property type="project" value="UniProtKB-SubCell"/>
</dbReference>
<dbReference type="GO" id="GO:0106430">
    <property type="term" value="F:dihydroorotate dehydrogenase (quinone) activity"/>
    <property type="evidence" value="ECO:0007669"/>
    <property type="project" value="UniProtKB-EC"/>
</dbReference>
<dbReference type="GO" id="GO:0006207">
    <property type="term" value="P:'de novo' pyrimidine nucleobase biosynthetic process"/>
    <property type="evidence" value="ECO:0007669"/>
    <property type="project" value="InterPro"/>
</dbReference>
<dbReference type="GO" id="GO:0044205">
    <property type="term" value="P:'de novo' UMP biosynthetic process"/>
    <property type="evidence" value="ECO:0007669"/>
    <property type="project" value="UniProtKB-UniRule"/>
</dbReference>
<dbReference type="CDD" id="cd04738">
    <property type="entry name" value="DHOD_2_like"/>
    <property type="match status" value="1"/>
</dbReference>
<dbReference type="FunFam" id="3.20.20.70:FF:000028">
    <property type="entry name" value="Dihydroorotate dehydrogenase (quinone)"/>
    <property type="match status" value="1"/>
</dbReference>
<dbReference type="Gene3D" id="3.20.20.70">
    <property type="entry name" value="Aldolase class I"/>
    <property type="match status" value="1"/>
</dbReference>
<dbReference type="HAMAP" id="MF_00225">
    <property type="entry name" value="DHO_dh_type2"/>
    <property type="match status" value="1"/>
</dbReference>
<dbReference type="InterPro" id="IPR013785">
    <property type="entry name" value="Aldolase_TIM"/>
</dbReference>
<dbReference type="InterPro" id="IPR050074">
    <property type="entry name" value="DHO_dehydrogenase"/>
</dbReference>
<dbReference type="InterPro" id="IPR012135">
    <property type="entry name" value="Dihydroorotate_DH_1_2"/>
</dbReference>
<dbReference type="InterPro" id="IPR005719">
    <property type="entry name" value="Dihydroorotate_DH_2"/>
</dbReference>
<dbReference type="InterPro" id="IPR005720">
    <property type="entry name" value="Dihydroorotate_DH_cat"/>
</dbReference>
<dbReference type="InterPro" id="IPR001295">
    <property type="entry name" value="Dihydroorotate_DH_CS"/>
</dbReference>
<dbReference type="NCBIfam" id="NF003644">
    <property type="entry name" value="PRK05286.1-1"/>
    <property type="match status" value="1"/>
</dbReference>
<dbReference type="NCBIfam" id="NF003645">
    <property type="entry name" value="PRK05286.1-2"/>
    <property type="match status" value="1"/>
</dbReference>
<dbReference type="NCBIfam" id="NF003646">
    <property type="entry name" value="PRK05286.1-4"/>
    <property type="match status" value="1"/>
</dbReference>
<dbReference type="NCBIfam" id="NF003652">
    <property type="entry name" value="PRK05286.2-5"/>
    <property type="match status" value="1"/>
</dbReference>
<dbReference type="NCBIfam" id="TIGR01036">
    <property type="entry name" value="pyrD_sub2"/>
    <property type="match status" value="1"/>
</dbReference>
<dbReference type="PANTHER" id="PTHR48109:SF4">
    <property type="entry name" value="DIHYDROOROTATE DEHYDROGENASE (QUINONE), MITOCHONDRIAL"/>
    <property type="match status" value="1"/>
</dbReference>
<dbReference type="PANTHER" id="PTHR48109">
    <property type="entry name" value="DIHYDROOROTATE DEHYDROGENASE (QUINONE), MITOCHONDRIAL-RELATED"/>
    <property type="match status" value="1"/>
</dbReference>
<dbReference type="Pfam" id="PF01180">
    <property type="entry name" value="DHO_dh"/>
    <property type="match status" value="1"/>
</dbReference>
<dbReference type="PIRSF" id="PIRSF000164">
    <property type="entry name" value="DHO_oxidase"/>
    <property type="match status" value="1"/>
</dbReference>
<dbReference type="SUPFAM" id="SSF51395">
    <property type="entry name" value="FMN-linked oxidoreductases"/>
    <property type="match status" value="1"/>
</dbReference>
<dbReference type="PROSITE" id="PS00911">
    <property type="entry name" value="DHODEHASE_1"/>
    <property type="match status" value="1"/>
</dbReference>
<dbReference type="PROSITE" id="PS00912">
    <property type="entry name" value="DHODEHASE_2"/>
    <property type="match status" value="1"/>
</dbReference>
<gene>
    <name evidence="1" type="primary">pyrD</name>
    <name type="ordered locus">H16_A1401</name>
</gene>
<sequence>MLNALYPLVRPALFSMDAEDAHHFTLNNLLRAHRMGLAGCIGNRIADDPRTVMGVRFPNPVGLAAGLDKDGAYIDGLAAFGFGFIEVGTVTPRAQPGNPRPRMFRLPQADALINRMGFNNGGVDAFVANVRASRWKAEGGVLGLNIGKNADTPIERANDDYLYCLERVYPHASYVTVNISSPNTKNLRQLQGASELDSLLSTLKDAQQRLADQHKRYVPLALKIAPDLDADQIGNIGDALVRHKIDGVIATNTTISREAVKGLPHAEEAGGLSGRPVFEASTRVVRALHGVVGDAVPIIGVGGIFGGADARAKIDAGAKLVQVYSGLIYRGPALVRECAAALRG</sequence>
<proteinExistence type="inferred from homology"/>
<feature type="chain" id="PRO_1000024210" description="Dihydroorotate dehydrogenase (quinone)">
    <location>
        <begin position="1"/>
        <end position="344"/>
    </location>
</feature>
<feature type="active site" description="Nucleophile" evidence="1">
    <location>
        <position position="181"/>
    </location>
</feature>
<feature type="binding site" evidence="1">
    <location>
        <begin position="65"/>
        <end position="69"/>
    </location>
    <ligand>
        <name>FMN</name>
        <dbReference type="ChEBI" id="CHEBI:58210"/>
    </ligand>
</feature>
<feature type="binding site" evidence="1">
    <location>
        <position position="69"/>
    </location>
    <ligand>
        <name>substrate</name>
    </ligand>
</feature>
<feature type="binding site" evidence="1">
    <location>
        <position position="89"/>
    </location>
    <ligand>
        <name>FMN</name>
        <dbReference type="ChEBI" id="CHEBI:58210"/>
    </ligand>
</feature>
<feature type="binding site" evidence="1">
    <location>
        <begin position="114"/>
        <end position="118"/>
    </location>
    <ligand>
        <name>substrate</name>
    </ligand>
</feature>
<feature type="binding site" evidence="1">
    <location>
        <position position="145"/>
    </location>
    <ligand>
        <name>FMN</name>
        <dbReference type="ChEBI" id="CHEBI:58210"/>
    </ligand>
</feature>
<feature type="binding site" evidence="1">
    <location>
        <position position="178"/>
    </location>
    <ligand>
        <name>FMN</name>
        <dbReference type="ChEBI" id="CHEBI:58210"/>
    </ligand>
</feature>
<feature type="binding site" evidence="1">
    <location>
        <position position="178"/>
    </location>
    <ligand>
        <name>substrate</name>
    </ligand>
</feature>
<feature type="binding site" evidence="1">
    <location>
        <position position="183"/>
    </location>
    <ligand>
        <name>substrate</name>
    </ligand>
</feature>
<feature type="binding site" evidence="1">
    <location>
        <position position="223"/>
    </location>
    <ligand>
        <name>FMN</name>
        <dbReference type="ChEBI" id="CHEBI:58210"/>
    </ligand>
</feature>
<feature type="binding site" evidence="1">
    <location>
        <position position="251"/>
    </location>
    <ligand>
        <name>FMN</name>
        <dbReference type="ChEBI" id="CHEBI:58210"/>
    </ligand>
</feature>
<feature type="binding site" evidence="1">
    <location>
        <begin position="252"/>
        <end position="253"/>
    </location>
    <ligand>
        <name>substrate</name>
    </ligand>
</feature>
<feature type="binding site" evidence="1">
    <location>
        <position position="274"/>
    </location>
    <ligand>
        <name>FMN</name>
        <dbReference type="ChEBI" id="CHEBI:58210"/>
    </ligand>
</feature>
<feature type="binding site" evidence="1">
    <location>
        <position position="303"/>
    </location>
    <ligand>
        <name>FMN</name>
        <dbReference type="ChEBI" id="CHEBI:58210"/>
    </ligand>
</feature>
<feature type="binding site" evidence="1">
    <location>
        <begin position="324"/>
        <end position="325"/>
    </location>
    <ligand>
        <name>FMN</name>
        <dbReference type="ChEBI" id="CHEBI:58210"/>
    </ligand>
</feature>
<comment type="function">
    <text evidence="1">Catalyzes the conversion of dihydroorotate to orotate with quinone as electron acceptor.</text>
</comment>
<comment type="catalytic activity">
    <reaction evidence="1">
        <text>(S)-dihydroorotate + a quinone = orotate + a quinol</text>
        <dbReference type="Rhea" id="RHEA:30187"/>
        <dbReference type="ChEBI" id="CHEBI:24646"/>
        <dbReference type="ChEBI" id="CHEBI:30839"/>
        <dbReference type="ChEBI" id="CHEBI:30864"/>
        <dbReference type="ChEBI" id="CHEBI:132124"/>
        <dbReference type="EC" id="1.3.5.2"/>
    </reaction>
</comment>
<comment type="cofactor">
    <cofactor evidence="1">
        <name>FMN</name>
        <dbReference type="ChEBI" id="CHEBI:58210"/>
    </cofactor>
    <text evidence="1">Binds 1 FMN per subunit.</text>
</comment>
<comment type="pathway">
    <text evidence="1">Pyrimidine metabolism; UMP biosynthesis via de novo pathway; orotate from (S)-dihydroorotate (quinone route): step 1/1.</text>
</comment>
<comment type="subunit">
    <text evidence="1">Monomer.</text>
</comment>
<comment type="subcellular location">
    <subcellularLocation>
        <location evidence="1">Cell membrane</location>
        <topology evidence="1">Peripheral membrane protein</topology>
    </subcellularLocation>
</comment>
<comment type="similarity">
    <text evidence="1">Belongs to the dihydroorotate dehydrogenase family. Type 2 subfamily.</text>
</comment>
<reference key="1">
    <citation type="journal article" date="2006" name="Nat. Biotechnol.">
        <title>Genome sequence of the bioplastic-producing 'Knallgas' bacterium Ralstonia eutropha H16.</title>
        <authorList>
            <person name="Pohlmann A."/>
            <person name="Fricke W.F."/>
            <person name="Reinecke F."/>
            <person name="Kusian B."/>
            <person name="Liesegang H."/>
            <person name="Cramm R."/>
            <person name="Eitinger T."/>
            <person name="Ewering C."/>
            <person name="Poetter M."/>
            <person name="Schwartz E."/>
            <person name="Strittmatter A."/>
            <person name="Voss I."/>
            <person name="Gottschalk G."/>
            <person name="Steinbuechel A."/>
            <person name="Friedrich B."/>
            <person name="Bowien B."/>
        </authorList>
    </citation>
    <scope>NUCLEOTIDE SEQUENCE [LARGE SCALE GENOMIC DNA]</scope>
    <source>
        <strain>ATCC 17699 / DSM 428 / KCTC 22496 / NCIMB 10442 / H16 / Stanier 337</strain>
    </source>
</reference>
<organism>
    <name type="scientific">Cupriavidus necator (strain ATCC 17699 / DSM 428 / KCTC 22496 / NCIMB 10442 / H16 / Stanier 337)</name>
    <name type="common">Ralstonia eutropha</name>
    <dbReference type="NCBI Taxonomy" id="381666"/>
    <lineage>
        <taxon>Bacteria</taxon>
        <taxon>Pseudomonadati</taxon>
        <taxon>Pseudomonadota</taxon>
        <taxon>Betaproteobacteria</taxon>
        <taxon>Burkholderiales</taxon>
        <taxon>Burkholderiaceae</taxon>
        <taxon>Cupriavidus</taxon>
    </lineage>
</organism>
<protein>
    <recommendedName>
        <fullName evidence="1">Dihydroorotate dehydrogenase (quinone)</fullName>
        <ecNumber evidence="1">1.3.5.2</ecNumber>
    </recommendedName>
    <alternativeName>
        <fullName evidence="1">DHOdehase</fullName>
        <shortName evidence="1">DHOD</shortName>
        <shortName evidence="1">DHODase</shortName>
    </alternativeName>
    <alternativeName>
        <fullName evidence="1">Dihydroorotate oxidase</fullName>
    </alternativeName>
</protein>
<keyword id="KW-1003">Cell membrane</keyword>
<keyword id="KW-0285">Flavoprotein</keyword>
<keyword id="KW-0288">FMN</keyword>
<keyword id="KW-0472">Membrane</keyword>
<keyword id="KW-0560">Oxidoreductase</keyword>
<keyword id="KW-0665">Pyrimidine biosynthesis</keyword>
<keyword id="KW-1185">Reference proteome</keyword>